<gene>
    <name evidence="1" type="primary">purH</name>
    <name type="ordered locus">LBA1552</name>
</gene>
<protein>
    <recommendedName>
        <fullName evidence="1">Bifunctional purine biosynthesis protein PurH</fullName>
    </recommendedName>
    <domain>
        <recommendedName>
            <fullName evidence="1">Phosphoribosylaminoimidazolecarboxamide formyltransferase</fullName>
            <ecNumber evidence="1">2.1.2.3</ecNumber>
        </recommendedName>
        <alternativeName>
            <fullName evidence="1">AICAR transformylase</fullName>
        </alternativeName>
    </domain>
    <domain>
        <recommendedName>
            <fullName evidence="1">IMP cyclohydrolase</fullName>
            <ecNumber evidence="1">3.5.4.10</ecNumber>
        </recommendedName>
        <alternativeName>
            <fullName evidence="1">ATIC</fullName>
        </alternativeName>
        <alternativeName>
            <fullName evidence="1">IMP synthase</fullName>
        </alternativeName>
        <alternativeName>
            <fullName evidence="1">Inosinicase</fullName>
        </alternativeName>
    </domain>
</protein>
<sequence>MKRALISVSDKTNLVDFAKGLVQNGYEIISTGGTKKTLDEAGVKTISVEEVTNFPEILDGRVKTLNPYIHGGLLAKRDDLEHMATLEKLNIKPIDLVCVNLYPFKQTIEKPDVTTEEAIENIDIGGPSLLRAASKNYQDVTVVTDKNDYDLVLKEIAEKGNTTLETRAKLAAKVFRATAAYDAVIANYLTKQVGLEDPEKLTLTYDLKEKMRYGENSHQKAWLYEDAIPKSFSILQAHQLHGKKLSYNNIKDADEALRCIREFQDEPTVVAMKHMNPCGIGRGDTLEEAWDRAYEADSVSIFGGVIALNRKVDLATAKKMHKIFLEIIIAPGFDDDALEVLEKKKNIRLLKLDFSKENEPTRPEIVSVMGGILQQEQDTLVENTDDWKVVTNAQPTEAQLKTMMFALKAVKHTKSNAIVVANDERTLGVGAGQPNRIDSAKIAIKHAGDAIDDRAVLSSDAFFPFNDCVEYAAKHGIKAIVQPGGSIRDKDSIEIADKYGVAMVFTGYRHFRH</sequence>
<keyword id="KW-0378">Hydrolase</keyword>
<keyword id="KW-0511">Multifunctional enzyme</keyword>
<keyword id="KW-0658">Purine biosynthesis</keyword>
<keyword id="KW-1185">Reference proteome</keyword>
<keyword id="KW-0808">Transferase</keyword>
<proteinExistence type="inferred from homology"/>
<organism>
    <name type="scientific">Lactobacillus acidophilus (strain ATCC 700396 / NCK56 / N2 / NCFM)</name>
    <dbReference type="NCBI Taxonomy" id="272621"/>
    <lineage>
        <taxon>Bacteria</taxon>
        <taxon>Bacillati</taxon>
        <taxon>Bacillota</taxon>
        <taxon>Bacilli</taxon>
        <taxon>Lactobacillales</taxon>
        <taxon>Lactobacillaceae</taxon>
        <taxon>Lactobacillus</taxon>
    </lineage>
</organism>
<comment type="catalytic activity">
    <reaction evidence="1">
        <text>(6R)-10-formyltetrahydrofolate + 5-amino-1-(5-phospho-beta-D-ribosyl)imidazole-4-carboxamide = 5-formamido-1-(5-phospho-D-ribosyl)imidazole-4-carboxamide + (6S)-5,6,7,8-tetrahydrofolate</text>
        <dbReference type="Rhea" id="RHEA:22192"/>
        <dbReference type="ChEBI" id="CHEBI:57453"/>
        <dbReference type="ChEBI" id="CHEBI:58467"/>
        <dbReference type="ChEBI" id="CHEBI:58475"/>
        <dbReference type="ChEBI" id="CHEBI:195366"/>
        <dbReference type="EC" id="2.1.2.3"/>
    </reaction>
</comment>
<comment type="catalytic activity">
    <reaction evidence="1">
        <text>IMP + H2O = 5-formamido-1-(5-phospho-D-ribosyl)imidazole-4-carboxamide</text>
        <dbReference type="Rhea" id="RHEA:18445"/>
        <dbReference type="ChEBI" id="CHEBI:15377"/>
        <dbReference type="ChEBI" id="CHEBI:58053"/>
        <dbReference type="ChEBI" id="CHEBI:58467"/>
        <dbReference type="EC" id="3.5.4.10"/>
    </reaction>
</comment>
<comment type="pathway">
    <text evidence="1">Purine metabolism; IMP biosynthesis via de novo pathway; 5-formamido-1-(5-phospho-D-ribosyl)imidazole-4-carboxamide from 5-amino-1-(5-phospho-D-ribosyl)imidazole-4-carboxamide (10-formyl THF route): step 1/1.</text>
</comment>
<comment type="pathway">
    <text evidence="1">Purine metabolism; IMP biosynthesis via de novo pathway; IMP from 5-formamido-1-(5-phospho-D-ribosyl)imidazole-4-carboxamide: step 1/1.</text>
</comment>
<comment type="domain">
    <text evidence="1">The IMP cyclohydrolase activity resides in the N-terminal region.</text>
</comment>
<comment type="similarity">
    <text evidence="1">Belongs to the PurH family.</text>
</comment>
<dbReference type="EC" id="2.1.2.3" evidence="1"/>
<dbReference type="EC" id="3.5.4.10" evidence="1"/>
<dbReference type="EMBL" id="CP000033">
    <property type="protein sequence ID" value="AAV43369.1"/>
    <property type="molecule type" value="Genomic_DNA"/>
</dbReference>
<dbReference type="RefSeq" id="WP_003548356.1">
    <property type="nucleotide sequence ID" value="NC_006814.3"/>
</dbReference>
<dbReference type="RefSeq" id="YP_194400.1">
    <property type="nucleotide sequence ID" value="NC_006814.3"/>
</dbReference>
<dbReference type="SMR" id="Q5FIV5"/>
<dbReference type="STRING" id="272621.LBA1552"/>
<dbReference type="GeneID" id="93289382"/>
<dbReference type="KEGG" id="lac:LBA1552"/>
<dbReference type="PATRIC" id="fig|272621.13.peg.1474"/>
<dbReference type="eggNOG" id="COG0138">
    <property type="taxonomic scope" value="Bacteria"/>
</dbReference>
<dbReference type="HOGENOM" id="CLU_016316_5_2_9"/>
<dbReference type="OrthoDB" id="9802065at2"/>
<dbReference type="BioCyc" id="LACI272621:G1G49-1517-MONOMER"/>
<dbReference type="UniPathway" id="UPA00074">
    <property type="reaction ID" value="UER00133"/>
</dbReference>
<dbReference type="UniPathway" id="UPA00074">
    <property type="reaction ID" value="UER00135"/>
</dbReference>
<dbReference type="Proteomes" id="UP000006381">
    <property type="component" value="Chromosome"/>
</dbReference>
<dbReference type="GO" id="GO:0005829">
    <property type="term" value="C:cytosol"/>
    <property type="evidence" value="ECO:0007669"/>
    <property type="project" value="TreeGrafter"/>
</dbReference>
<dbReference type="GO" id="GO:0003937">
    <property type="term" value="F:IMP cyclohydrolase activity"/>
    <property type="evidence" value="ECO:0007669"/>
    <property type="project" value="UniProtKB-UniRule"/>
</dbReference>
<dbReference type="GO" id="GO:0004643">
    <property type="term" value="F:phosphoribosylaminoimidazolecarboxamide formyltransferase activity"/>
    <property type="evidence" value="ECO:0007669"/>
    <property type="project" value="UniProtKB-UniRule"/>
</dbReference>
<dbReference type="GO" id="GO:0006189">
    <property type="term" value="P:'de novo' IMP biosynthetic process"/>
    <property type="evidence" value="ECO:0007669"/>
    <property type="project" value="UniProtKB-UniRule"/>
</dbReference>
<dbReference type="CDD" id="cd01421">
    <property type="entry name" value="IMPCH"/>
    <property type="match status" value="1"/>
</dbReference>
<dbReference type="FunFam" id="3.40.140.20:FF:000001">
    <property type="entry name" value="Bifunctional purine biosynthesis protein PurH"/>
    <property type="match status" value="1"/>
</dbReference>
<dbReference type="FunFam" id="3.40.140.20:FF:000002">
    <property type="entry name" value="Bifunctional purine biosynthesis protein PurH"/>
    <property type="match status" value="1"/>
</dbReference>
<dbReference type="FunFam" id="3.40.50.1380:FF:000001">
    <property type="entry name" value="Bifunctional purine biosynthesis protein PurH"/>
    <property type="match status" value="1"/>
</dbReference>
<dbReference type="Gene3D" id="3.40.140.20">
    <property type="match status" value="2"/>
</dbReference>
<dbReference type="Gene3D" id="3.40.50.1380">
    <property type="entry name" value="Methylglyoxal synthase-like domain"/>
    <property type="match status" value="1"/>
</dbReference>
<dbReference type="HAMAP" id="MF_00139">
    <property type="entry name" value="PurH"/>
    <property type="match status" value="1"/>
</dbReference>
<dbReference type="InterPro" id="IPR024051">
    <property type="entry name" value="AICAR_Tfase_dup_dom_sf"/>
</dbReference>
<dbReference type="InterPro" id="IPR016193">
    <property type="entry name" value="Cytidine_deaminase-like"/>
</dbReference>
<dbReference type="InterPro" id="IPR011607">
    <property type="entry name" value="MGS-like_dom"/>
</dbReference>
<dbReference type="InterPro" id="IPR036914">
    <property type="entry name" value="MGS-like_dom_sf"/>
</dbReference>
<dbReference type="InterPro" id="IPR002695">
    <property type="entry name" value="PurH-like"/>
</dbReference>
<dbReference type="NCBIfam" id="NF002049">
    <property type="entry name" value="PRK00881.1"/>
    <property type="match status" value="1"/>
</dbReference>
<dbReference type="NCBIfam" id="TIGR00355">
    <property type="entry name" value="purH"/>
    <property type="match status" value="1"/>
</dbReference>
<dbReference type="PANTHER" id="PTHR11692:SF0">
    <property type="entry name" value="BIFUNCTIONAL PURINE BIOSYNTHESIS PROTEIN ATIC"/>
    <property type="match status" value="1"/>
</dbReference>
<dbReference type="PANTHER" id="PTHR11692">
    <property type="entry name" value="BIFUNCTIONAL PURINE BIOSYNTHESIS PROTEIN PURH"/>
    <property type="match status" value="1"/>
</dbReference>
<dbReference type="Pfam" id="PF01808">
    <property type="entry name" value="AICARFT_IMPCHas"/>
    <property type="match status" value="1"/>
</dbReference>
<dbReference type="Pfam" id="PF02142">
    <property type="entry name" value="MGS"/>
    <property type="match status" value="1"/>
</dbReference>
<dbReference type="PIRSF" id="PIRSF000414">
    <property type="entry name" value="AICARFT_IMPCHas"/>
    <property type="match status" value="1"/>
</dbReference>
<dbReference type="SMART" id="SM00798">
    <property type="entry name" value="AICARFT_IMPCHas"/>
    <property type="match status" value="1"/>
</dbReference>
<dbReference type="SMART" id="SM00851">
    <property type="entry name" value="MGS"/>
    <property type="match status" value="1"/>
</dbReference>
<dbReference type="SUPFAM" id="SSF53927">
    <property type="entry name" value="Cytidine deaminase-like"/>
    <property type="match status" value="1"/>
</dbReference>
<dbReference type="SUPFAM" id="SSF52335">
    <property type="entry name" value="Methylglyoxal synthase-like"/>
    <property type="match status" value="1"/>
</dbReference>
<dbReference type="PROSITE" id="PS51855">
    <property type="entry name" value="MGS"/>
    <property type="match status" value="1"/>
</dbReference>
<feature type="chain" id="PRO_1000018896" description="Bifunctional purine biosynthesis protein PurH">
    <location>
        <begin position="1"/>
        <end position="513"/>
    </location>
</feature>
<feature type="domain" description="MGS-like" evidence="2">
    <location>
        <begin position="1"/>
        <end position="144"/>
    </location>
</feature>
<name>PUR9_LACAC</name>
<accession>Q5FIV5</accession>
<reference key="1">
    <citation type="journal article" date="2005" name="Proc. Natl. Acad. Sci. U.S.A.">
        <title>Complete genome sequence of the probiotic lactic acid bacterium Lactobacillus acidophilus NCFM.</title>
        <authorList>
            <person name="Altermann E."/>
            <person name="Russell W.M."/>
            <person name="Azcarate-Peril M.A."/>
            <person name="Barrangou R."/>
            <person name="Buck B.L."/>
            <person name="McAuliffe O."/>
            <person name="Souther N."/>
            <person name="Dobson A."/>
            <person name="Duong T."/>
            <person name="Callanan M."/>
            <person name="Lick S."/>
            <person name="Hamrick A."/>
            <person name="Cano R."/>
            <person name="Klaenhammer T.R."/>
        </authorList>
    </citation>
    <scope>NUCLEOTIDE SEQUENCE [LARGE SCALE GENOMIC DNA]</scope>
    <source>
        <strain>ATCC 700396 / NCK56 / N2 / NCFM</strain>
    </source>
</reference>
<evidence type="ECO:0000255" key="1">
    <source>
        <dbReference type="HAMAP-Rule" id="MF_00139"/>
    </source>
</evidence>
<evidence type="ECO:0000255" key="2">
    <source>
        <dbReference type="PROSITE-ProRule" id="PRU01202"/>
    </source>
</evidence>